<feature type="chain" id="PRO_0000086233" description="Serine/threonine-protein kinase LATS1">
    <location>
        <begin position="1"/>
        <end position="1129"/>
    </location>
</feature>
<feature type="domain" description="UBA" evidence="5">
    <location>
        <begin position="100"/>
        <end position="141"/>
    </location>
</feature>
<feature type="domain" description="Protein kinase" evidence="4">
    <location>
        <begin position="704"/>
        <end position="1009"/>
    </location>
</feature>
<feature type="domain" description="AGC-kinase C-terminal" evidence="6">
    <location>
        <begin position="1010"/>
        <end position="1089"/>
    </location>
</feature>
<feature type="region of interest" description="Disordered" evidence="8">
    <location>
        <begin position="1"/>
        <end position="71"/>
    </location>
</feature>
<feature type="region of interest" description="Disordered" evidence="8">
    <location>
        <begin position="148"/>
        <end position="216"/>
    </location>
</feature>
<feature type="region of interest" description="Disordered" evidence="8">
    <location>
        <begin position="228"/>
        <end position="276"/>
    </location>
</feature>
<feature type="region of interest" description="Disordered" evidence="8">
    <location>
        <begin position="292"/>
        <end position="317"/>
    </location>
</feature>
<feature type="region of interest" description="Disordered" evidence="8">
    <location>
        <begin position="363"/>
        <end position="407"/>
    </location>
</feature>
<feature type="region of interest" description="Disordered" evidence="8">
    <location>
        <begin position="432"/>
        <end position="492"/>
    </location>
</feature>
<feature type="region of interest" description="Disordered" evidence="8">
    <location>
        <begin position="513"/>
        <end position="630"/>
    </location>
</feature>
<feature type="region of interest" description="Interaction with YAP1" evidence="1">
    <location>
        <begin position="525"/>
        <end position="654"/>
    </location>
</feature>
<feature type="region of interest" description="Disordered" evidence="8">
    <location>
        <begin position="1104"/>
        <end position="1129"/>
    </location>
</feature>
<feature type="short sequence motif" description="PPxY motif 1">
    <location>
        <begin position="372"/>
        <end position="375"/>
    </location>
</feature>
<feature type="short sequence motif" description="PPxY motif 2">
    <location>
        <begin position="555"/>
        <end position="558"/>
    </location>
</feature>
<feature type="compositionally biased region" description="Basic and acidic residues" evidence="8">
    <location>
        <begin position="1"/>
        <end position="11"/>
    </location>
</feature>
<feature type="compositionally biased region" description="Polar residues" evidence="8">
    <location>
        <begin position="19"/>
        <end position="30"/>
    </location>
</feature>
<feature type="compositionally biased region" description="Basic and acidic residues" evidence="8">
    <location>
        <begin position="46"/>
        <end position="64"/>
    </location>
</feature>
<feature type="compositionally biased region" description="Pro residues" evidence="8">
    <location>
        <begin position="235"/>
        <end position="268"/>
    </location>
</feature>
<feature type="compositionally biased region" description="Pro residues" evidence="8">
    <location>
        <begin position="300"/>
        <end position="312"/>
    </location>
</feature>
<feature type="compositionally biased region" description="Polar residues" evidence="8">
    <location>
        <begin position="380"/>
        <end position="392"/>
    </location>
</feature>
<feature type="compositionally biased region" description="Low complexity" evidence="8">
    <location>
        <begin position="433"/>
        <end position="445"/>
    </location>
</feature>
<feature type="compositionally biased region" description="Polar residues" evidence="8">
    <location>
        <begin position="453"/>
        <end position="481"/>
    </location>
</feature>
<feature type="compositionally biased region" description="Low complexity" evidence="8">
    <location>
        <begin position="482"/>
        <end position="492"/>
    </location>
</feature>
<feature type="compositionally biased region" description="Low complexity" evidence="8">
    <location>
        <begin position="520"/>
        <end position="530"/>
    </location>
</feature>
<feature type="compositionally biased region" description="Basic and acidic residues" evidence="8">
    <location>
        <begin position="578"/>
        <end position="608"/>
    </location>
</feature>
<feature type="compositionally biased region" description="Basic and acidic residues" evidence="8">
    <location>
        <begin position="620"/>
        <end position="629"/>
    </location>
</feature>
<feature type="active site" description="Proton acceptor" evidence="3 4 7">
    <location>
        <position position="827"/>
    </location>
</feature>
<feature type="binding site" evidence="3 4">
    <location>
        <begin position="710"/>
        <end position="718"/>
    </location>
    <ligand>
        <name>ATP</name>
        <dbReference type="ChEBI" id="CHEBI:30616"/>
    </ligand>
</feature>
<feature type="binding site" evidence="2 4">
    <location>
        <position position="733"/>
    </location>
    <ligand>
        <name>ATP</name>
        <dbReference type="ChEBI" id="CHEBI:30616"/>
    </ligand>
</feature>
<feature type="modified residue" description="Phosphothreonine" evidence="15">
    <location>
        <position position="246"/>
    </location>
</feature>
<feature type="modified residue" description="Phosphoserine" evidence="16">
    <location>
        <position position="278"/>
    </location>
</feature>
<feature type="modified residue" description="Phosphoserine; by NUAK1 and NUAK2" evidence="14 15 16">
    <location>
        <position position="463"/>
    </location>
</feature>
<feature type="modified residue" description="Phosphoserine" evidence="15">
    <location>
        <position position="612"/>
    </location>
</feature>
<feature type="modified residue" description="Phosphoserine" evidence="2">
    <location>
        <position position="673"/>
    </location>
</feature>
<feature type="modified residue" description="Phosphoserine; by STK3/MST2" evidence="2">
    <location>
        <position position="908"/>
    </location>
</feature>
<feature type="modified residue" description="Phosphothreonine; by STK3/MST2" evidence="2">
    <location>
        <position position="1078"/>
    </location>
</feature>
<feature type="sequence conflict" description="In Ref. 3; AAD16883." evidence="12" ref="3">
    <original>F</original>
    <variation>C</variation>
    <location>
        <position position="940"/>
    </location>
</feature>
<feature type="sequence conflict" description="In Ref. 3; AAD16883." evidence="12" ref="3">
    <original>N</original>
    <variation>I</variation>
    <location>
        <position position="963"/>
    </location>
</feature>
<feature type="sequence conflict" description="In Ref. 3; AAD16883." evidence="12" ref="3">
    <original>N</original>
    <variation>S</variation>
    <location>
        <position position="1061"/>
    </location>
</feature>
<feature type="helix" evidence="17">
    <location>
        <begin position="560"/>
        <end position="562"/>
    </location>
</feature>
<evidence type="ECO:0000250" key="1"/>
<evidence type="ECO:0000250" key="2">
    <source>
        <dbReference type="UniProtKB" id="O95835"/>
    </source>
</evidence>
<evidence type="ECO:0000250" key="3">
    <source>
        <dbReference type="UniProtKB" id="P22612"/>
    </source>
</evidence>
<evidence type="ECO:0000255" key="4">
    <source>
        <dbReference type="PROSITE-ProRule" id="PRU00159"/>
    </source>
</evidence>
<evidence type="ECO:0000255" key="5">
    <source>
        <dbReference type="PROSITE-ProRule" id="PRU00212"/>
    </source>
</evidence>
<evidence type="ECO:0000255" key="6">
    <source>
        <dbReference type="PROSITE-ProRule" id="PRU00618"/>
    </source>
</evidence>
<evidence type="ECO:0000255" key="7">
    <source>
        <dbReference type="PROSITE-ProRule" id="PRU10027"/>
    </source>
</evidence>
<evidence type="ECO:0000256" key="8">
    <source>
        <dbReference type="SAM" id="MobiDB-lite"/>
    </source>
</evidence>
<evidence type="ECO:0000269" key="9">
    <source>
    </source>
</evidence>
<evidence type="ECO:0000269" key="10">
    <source>
    </source>
</evidence>
<evidence type="ECO:0000269" key="11">
    <source>
    </source>
</evidence>
<evidence type="ECO:0000305" key="12"/>
<evidence type="ECO:0000312" key="13">
    <source>
        <dbReference type="EMBL" id="AAD16883.1"/>
    </source>
</evidence>
<evidence type="ECO:0007744" key="14">
    <source>
    </source>
</evidence>
<evidence type="ECO:0007744" key="15">
    <source>
    </source>
</evidence>
<evidence type="ECO:0007744" key="16">
    <source>
    </source>
</evidence>
<evidence type="ECO:0007829" key="17">
    <source>
        <dbReference type="PDB" id="6J68"/>
    </source>
</evidence>
<protein>
    <recommendedName>
        <fullName>Serine/threonine-protein kinase LATS1</fullName>
        <ecNumber evidence="2">2.7.11.1</ecNumber>
    </recommendedName>
    <alternativeName>
        <fullName>Large tumor suppressor homolog 1</fullName>
    </alternativeName>
    <alternativeName>
        <fullName>WARTS protein kinase</fullName>
    </alternativeName>
</protein>
<sequence length="1129" mass="126258">MKRGEKPEGYRQMRPKTFPASNYPGSSRQMLQEIRESLRNLSKPSDASKAEHNLNKMSTEDPRQVRNPPKFGTHHKALQEIRNSLLPFANETSSSRSPSEVNPQMFQDLQAAGFDEDMVIQALQKTNNRSIEAAVEFISKMSYQDPRREQMSAAAARPINATMKPGNVQHSINRKQSWKGSKESLVPQRHGPSLGENVVYRSESPNSQADVGRPLSGSGIAAFAQAHPSNGQRVNPPPPPQVRSVTPPPPPRGQTPPPRGTTPPPPSWEPSSQTKRYSGNMEYVISRISPVPPGAWQEGYPPPPLTTSPMNPPSQAQRAISSVPVGRQPIIMQSTSKFNFTPGRPGVQNGGGQSDFIVHQNVPTGSVTRQPPPPYPLTPANGQSPSALQTGASAAPPSFANGNVPQSMMVPNRNSHNMELYNINVPGLQTAWPQSSSAPAQSSPSGGHEIPTWQPNIPVRSNSFNNPLGSRASHSANSQPSATTVTAITPAPIQQPVKSMRVLKPELQTALAPTHPSWMPQPVQTVQPTPFSEGTASSVPVIPPVAEAPSYQGPPPPYPKHLLHQNPSVPPYESVSKPCKDEQPSLPKEDDSEKSADSGDSGDKEKKQITTSPITVRKNKKDEERRESRIQSYSPQAFKFFMEQHVENVLKSHQQRLHRKKQLENEMMRVGLSQDAQDQMRKMLCQKESNYIRLKRAKMDKSMFVKIKTLGIGAFGEVCLARKVDTKALYATKTLRKKDVLLRNQVAHVKAERDILAEADNEWVVRLYYSFQDKDNLYFVMDYIPGGDMMSLLIRMGIFPENLARFYIAELTCAVESVHKMGFIHRDIKPDNILIDRDGHIKLTDFGLCTGFRWTHDSKYYQSGDHPRQDSMDFSNEWGDPSNCRCGDRLKPLERRAARQHQRCLAHSLVGTPNYIAPEVLLRTGYTQLCDWWSVGVILFEMLVGQPPFLAQTPLETQMKVINWQTSLHIPPQAKLSPEASDLIIKLCRGPEDRLGKNGADEIKAHPFFKTIDFSSDLRQQSASYIPKITHPTDTSNFDPVDPDKLWSDGSEEENISDTLNGWYKNGKHPEHAFYEFTFRRFFDDNGYPYNYPKPIEYEYIHSQGSEQQSDEDDQHTSSDGNNRDLVYV</sequence>
<proteinExistence type="evidence at protein level"/>
<dbReference type="EC" id="2.7.11.1" evidence="2"/>
<dbReference type="EMBL" id="BC158092">
    <property type="protein sequence ID" value="AAI58093.1"/>
    <property type="molecule type" value="mRNA"/>
</dbReference>
<dbReference type="EMBL" id="BC158123">
    <property type="protein sequence ID" value="AAI58124.1"/>
    <property type="molecule type" value="mRNA"/>
</dbReference>
<dbReference type="EMBL" id="AK038612">
    <property type="protein sequence ID" value="BAC30063.1"/>
    <property type="molecule type" value="mRNA"/>
</dbReference>
<dbReference type="EMBL" id="AF104414">
    <property type="protein sequence ID" value="AAD16883.1"/>
    <property type="molecule type" value="mRNA"/>
</dbReference>
<dbReference type="CCDS" id="CCDS48494.1"/>
<dbReference type="RefSeq" id="NP_034820.1">
    <property type="nucleotide sequence ID" value="NM_010690.1"/>
</dbReference>
<dbReference type="PDB" id="5B6B">
    <property type="method" value="X-ray"/>
    <property type="resolution" value="3.54 A"/>
    <property type="chains" value="C/E/G/I/J/L/N/P=621-703"/>
</dbReference>
<dbReference type="PDB" id="6J68">
    <property type="method" value="X-ray"/>
    <property type="resolution" value="2.50 A"/>
    <property type="chains" value="C/D=545-568"/>
</dbReference>
<dbReference type="PDBsum" id="5B6B"/>
<dbReference type="PDBsum" id="6J68"/>
<dbReference type="SMR" id="Q8BYR2"/>
<dbReference type="BioGRID" id="201113">
    <property type="interactions" value="8"/>
</dbReference>
<dbReference type="DIP" id="DIP-47647N"/>
<dbReference type="FunCoup" id="Q8BYR2">
    <property type="interactions" value="2771"/>
</dbReference>
<dbReference type="IntAct" id="Q8BYR2">
    <property type="interactions" value="2"/>
</dbReference>
<dbReference type="MINT" id="Q8BYR2"/>
<dbReference type="STRING" id="10090.ENSMUSP00000132078"/>
<dbReference type="GlyGen" id="Q8BYR2">
    <property type="glycosylation" value="8 sites, 1 N-linked glycan (1 site), 1 O-linked glycan (3 sites)"/>
</dbReference>
<dbReference type="iPTMnet" id="Q8BYR2"/>
<dbReference type="PhosphoSitePlus" id="Q8BYR2"/>
<dbReference type="jPOST" id="Q8BYR2"/>
<dbReference type="PaxDb" id="10090-ENSMUSP00000132078"/>
<dbReference type="PeptideAtlas" id="Q8BYR2"/>
<dbReference type="ProteomicsDB" id="264917"/>
<dbReference type="Pumba" id="Q8BYR2"/>
<dbReference type="Antibodypedia" id="33280">
    <property type="antibodies" value="394 antibodies from 32 providers"/>
</dbReference>
<dbReference type="DNASU" id="16798"/>
<dbReference type="Ensembl" id="ENSMUST00000165952.9">
    <property type="protein sequence ID" value="ENSMUSP00000132078.2"/>
    <property type="gene ID" value="ENSMUSG00000040021.15"/>
</dbReference>
<dbReference type="Ensembl" id="ENSMUST00000217931.2">
    <property type="protein sequence ID" value="ENSMUSP00000151533.2"/>
    <property type="gene ID" value="ENSMUSG00000040021.15"/>
</dbReference>
<dbReference type="GeneID" id="16798"/>
<dbReference type="KEGG" id="mmu:16798"/>
<dbReference type="UCSC" id="uc007eig.2">
    <property type="organism name" value="mouse"/>
</dbReference>
<dbReference type="AGR" id="MGI:1333883"/>
<dbReference type="CTD" id="9113"/>
<dbReference type="MGI" id="MGI:1333883">
    <property type="gene designation" value="Lats1"/>
</dbReference>
<dbReference type="VEuPathDB" id="HostDB:ENSMUSG00000040021"/>
<dbReference type="eggNOG" id="KOG0608">
    <property type="taxonomic scope" value="Eukaryota"/>
</dbReference>
<dbReference type="GeneTree" id="ENSGT00940000157684"/>
<dbReference type="HOGENOM" id="CLU_004885_1_2_1"/>
<dbReference type="InParanoid" id="Q8BYR2"/>
<dbReference type="OMA" id="NHHGSRQ"/>
<dbReference type="OrthoDB" id="3638488at2759"/>
<dbReference type="PhylomeDB" id="Q8BYR2"/>
<dbReference type="TreeFam" id="TF351549"/>
<dbReference type="Reactome" id="R-MMU-2028269">
    <property type="pathway name" value="Signaling by Hippo"/>
</dbReference>
<dbReference type="BioGRID-ORCS" id="16798">
    <property type="hits" value="2 hits in 85 CRISPR screens"/>
</dbReference>
<dbReference type="CD-CODE" id="9A00E86C">
    <property type="entry name" value="DDR1 condensate"/>
</dbReference>
<dbReference type="ChiTaRS" id="Lats1">
    <property type="organism name" value="mouse"/>
</dbReference>
<dbReference type="PRO" id="PR:Q8BYR2"/>
<dbReference type="Proteomes" id="UP000000589">
    <property type="component" value="Chromosome 10"/>
</dbReference>
<dbReference type="RNAct" id="Q8BYR2">
    <property type="molecule type" value="protein"/>
</dbReference>
<dbReference type="Bgee" id="ENSMUSG00000040021">
    <property type="expression patterns" value="Expressed in undifferentiated genital tubercle and 67 other cell types or tissues"/>
</dbReference>
<dbReference type="GO" id="GO:0005813">
    <property type="term" value="C:centrosome"/>
    <property type="evidence" value="ECO:0007669"/>
    <property type="project" value="UniProtKB-SubCell"/>
</dbReference>
<dbReference type="GO" id="GO:0005737">
    <property type="term" value="C:cytoplasm"/>
    <property type="evidence" value="ECO:0007669"/>
    <property type="project" value="UniProtKB-KW"/>
</dbReference>
<dbReference type="GO" id="GO:0098978">
    <property type="term" value="C:glutamatergic synapse"/>
    <property type="evidence" value="ECO:0007669"/>
    <property type="project" value="Ensembl"/>
</dbReference>
<dbReference type="GO" id="GO:0030496">
    <property type="term" value="C:midbody"/>
    <property type="evidence" value="ECO:0007669"/>
    <property type="project" value="UniProtKB-SubCell"/>
</dbReference>
<dbReference type="GO" id="GO:0098794">
    <property type="term" value="C:postsynapse"/>
    <property type="evidence" value="ECO:0007669"/>
    <property type="project" value="Ensembl"/>
</dbReference>
<dbReference type="GO" id="GO:0000922">
    <property type="term" value="C:spindle pole"/>
    <property type="evidence" value="ECO:0000250"/>
    <property type="project" value="UniProtKB"/>
</dbReference>
<dbReference type="GO" id="GO:0005524">
    <property type="term" value="F:ATP binding"/>
    <property type="evidence" value="ECO:0000250"/>
    <property type="project" value="UniProtKB"/>
</dbReference>
<dbReference type="GO" id="GO:0000287">
    <property type="term" value="F:magnesium ion binding"/>
    <property type="evidence" value="ECO:0000250"/>
    <property type="project" value="UniProtKB"/>
</dbReference>
<dbReference type="GO" id="GO:0030331">
    <property type="term" value="F:nuclear estrogen receptor binding"/>
    <property type="evidence" value="ECO:0007669"/>
    <property type="project" value="Ensembl"/>
</dbReference>
<dbReference type="GO" id="GO:0019901">
    <property type="term" value="F:protein kinase binding"/>
    <property type="evidence" value="ECO:0007669"/>
    <property type="project" value="Ensembl"/>
</dbReference>
<dbReference type="GO" id="GO:0106310">
    <property type="term" value="F:protein serine kinase activity"/>
    <property type="evidence" value="ECO:0007669"/>
    <property type="project" value="RHEA"/>
</dbReference>
<dbReference type="GO" id="GO:0004674">
    <property type="term" value="F:protein serine/threonine kinase activity"/>
    <property type="evidence" value="ECO:0000314"/>
    <property type="project" value="UniProtKB"/>
</dbReference>
<dbReference type="GO" id="GO:0051301">
    <property type="term" value="P:cell division"/>
    <property type="evidence" value="ECO:0007669"/>
    <property type="project" value="UniProtKB-KW"/>
</dbReference>
<dbReference type="GO" id="GO:0000086">
    <property type="term" value="P:G2/M transition of mitotic cell cycle"/>
    <property type="evidence" value="ECO:0000250"/>
    <property type="project" value="UniProtKB"/>
</dbReference>
<dbReference type="GO" id="GO:0035329">
    <property type="term" value="P:hippo signaling"/>
    <property type="evidence" value="ECO:0000316"/>
    <property type="project" value="MGI"/>
</dbReference>
<dbReference type="GO" id="GO:0009755">
    <property type="term" value="P:hormone-mediated signaling pathway"/>
    <property type="evidence" value="ECO:0000314"/>
    <property type="project" value="UniProtKB"/>
</dbReference>
<dbReference type="GO" id="GO:0001827">
    <property type="term" value="P:inner cell mass cell fate commitment"/>
    <property type="evidence" value="ECO:0000316"/>
    <property type="project" value="MGI"/>
</dbReference>
<dbReference type="GO" id="GO:0001828">
    <property type="term" value="P:inner cell mass cellular morphogenesis"/>
    <property type="evidence" value="ECO:0000316"/>
    <property type="project" value="MGI"/>
</dbReference>
<dbReference type="GO" id="GO:0030216">
    <property type="term" value="P:keratinocyte differentiation"/>
    <property type="evidence" value="ECO:0000316"/>
    <property type="project" value="MGI"/>
</dbReference>
<dbReference type="GO" id="GO:0060644">
    <property type="term" value="P:mammary gland epithelial cell differentiation"/>
    <property type="evidence" value="ECO:0000250"/>
    <property type="project" value="UniProtKB"/>
</dbReference>
<dbReference type="GO" id="GO:0090090">
    <property type="term" value="P:negative regulation of canonical Wnt signaling pathway"/>
    <property type="evidence" value="ECO:0007669"/>
    <property type="project" value="Ensembl"/>
</dbReference>
<dbReference type="GO" id="GO:0045736">
    <property type="term" value="P:negative regulation of cyclin-dependent protein serine/threonine kinase activity"/>
    <property type="evidence" value="ECO:0000250"/>
    <property type="project" value="UniProtKB"/>
</dbReference>
<dbReference type="GO" id="GO:1900181">
    <property type="term" value="P:negative regulation of protein localization to nucleus"/>
    <property type="evidence" value="ECO:0000315"/>
    <property type="project" value="UniProtKB"/>
</dbReference>
<dbReference type="GO" id="GO:1900227">
    <property type="term" value="P:positive regulation of NLRP3 inflammasome complex assembly"/>
    <property type="evidence" value="ECO:0000314"/>
    <property type="project" value="UniProtKB"/>
</dbReference>
<dbReference type="GO" id="GO:0008104">
    <property type="term" value="P:protein localization"/>
    <property type="evidence" value="ECO:0000316"/>
    <property type="project" value="MGI"/>
</dbReference>
<dbReference type="GO" id="GO:0006468">
    <property type="term" value="P:protein phosphorylation"/>
    <property type="evidence" value="ECO:0000250"/>
    <property type="project" value="UniProtKB"/>
</dbReference>
<dbReference type="GO" id="GO:0030833">
    <property type="term" value="P:regulation of actin filament polymerization"/>
    <property type="evidence" value="ECO:0000250"/>
    <property type="project" value="UniProtKB"/>
</dbReference>
<dbReference type="GO" id="GO:0033146">
    <property type="term" value="P:regulation of intracellular estrogen receptor signaling pathway"/>
    <property type="evidence" value="ECO:0000250"/>
    <property type="project" value="UniProtKB"/>
</dbReference>
<dbReference type="GO" id="GO:0099151">
    <property type="term" value="P:regulation of postsynaptic density assembly"/>
    <property type="evidence" value="ECO:0007669"/>
    <property type="project" value="Ensembl"/>
</dbReference>
<dbReference type="GO" id="GO:0017015">
    <property type="term" value="P:regulation of transforming growth factor beta receptor signaling pathway"/>
    <property type="evidence" value="ECO:0000315"/>
    <property type="project" value="UniProtKB"/>
</dbReference>
<dbReference type="GO" id="GO:2000058">
    <property type="term" value="P:regulation of ubiquitin-dependent protein catabolic process"/>
    <property type="evidence" value="ECO:0000250"/>
    <property type="project" value="UniProtKB"/>
</dbReference>
<dbReference type="GO" id="GO:0000819">
    <property type="term" value="P:sister chromatid segregation"/>
    <property type="evidence" value="ECO:0000250"/>
    <property type="project" value="UniProtKB"/>
</dbReference>
<dbReference type="CDD" id="cd21778">
    <property type="entry name" value="MobB_LATS1"/>
    <property type="match status" value="1"/>
</dbReference>
<dbReference type="CDD" id="cd05625">
    <property type="entry name" value="STKc_LATS1"/>
    <property type="match status" value="1"/>
</dbReference>
<dbReference type="FunFam" id="3.30.200.20:FF:001246">
    <property type="entry name" value="Large tumor suppressor kinase 1"/>
    <property type="match status" value="1"/>
</dbReference>
<dbReference type="FunFam" id="1.10.510.10:FF:000086">
    <property type="entry name" value="Non-specific serine/threonine protein kinase"/>
    <property type="match status" value="1"/>
</dbReference>
<dbReference type="FunFam" id="1.10.510.10:FF:000199">
    <property type="entry name" value="Non-specific serine/threonine protein kinase"/>
    <property type="match status" value="1"/>
</dbReference>
<dbReference type="FunFam" id="1.10.8.10:FF:000029">
    <property type="entry name" value="Serine/threonine-protein kinase LATS1 isoform 1"/>
    <property type="match status" value="1"/>
</dbReference>
<dbReference type="Gene3D" id="1.10.8.10">
    <property type="entry name" value="DNA helicase RuvA subunit, C-terminal domain"/>
    <property type="match status" value="1"/>
</dbReference>
<dbReference type="Gene3D" id="3.30.200.20">
    <property type="entry name" value="Phosphorylase Kinase, domain 1"/>
    <property type="match status" value="1"/>
</dbReference>
<dbReference type="Gene3D" id="1.10.510.10">
    <property type="entry name" value="Transferase(Phosphotransferase) domain 1"/>
    <property type="match status" value="2"/>
</dbReference>
<dbReference type="InterPro" id="IPR000961">
    <property type="entry name" value="AGC-kinase_C"/>
</dbReference>
<dbReference type="InterPro" id="IPR011009">
    <property type="entry name" value="Kinase-like_dom_sf"/>
</dbReference>
<dbReference type="InterPro" id="IPR049761">
    <property type="entry name" value="LATS1-like_MobB"/>
</dbReference>
<dbReference type="InterPro" id="IPR042706">
    <property type="entry name" value="LATS1_STKc"/>
</dbReference>
<dbReference type="InterPro" id="IPR017892">
    <property type="entry name" value="Pkinase_C"/>
</dbReference>
<dbReference type="InterPro" id="IPR000719">
    <property type="entry name" value="Prot_kinase_dom"/>
</dbReference>
<dbReference type="InterPro" id="IPR008271">
    <property type="entry name" value="Ser/Thr_kinase_AS"/>
</dbReference>
<dbReference type="InterPro" id="IPR050236">
    <property type="entry name" value="Ser_Thr_kinase_AGC"/>
</dbReference>
<dbReference type="InterPro" id="IPR015940">
    <property type="entry name" value="UBA"/>
</dbReference>
<dbReference type="InterPro" id="IPR009060">
    <property type="entry name" value="UBA-like_sf"/>
</dbReference>
<dbReference type="PANTHER" id="PTHR24356">
    <property type="entry name" value="SERINE/THREONINE-PROTEIN KINASE"/>
    <property type="match status" value="1"/>
</dbReference>
<dbReference type="PANTHER" id="PTHR24356:SF138">
    <property type="entry name" value="SERINE_THREONINE-PROTEIN KINASE LATS1"/>
    <property type="match status" value="1"/>
</dbReference>
<dbReference type="Pfam" id="PF00069">
    <property type="entry name" value="Pkinase"/>
    <property type="match status" value="2"/>
</dbReference>
<dbReference type="Pfam" id="PF00433">
    <property type="entry name" value="Pkinase_C"/>
    <property type="match status" value="1"/>
</dbReference>
<dbReference type="Pfam" id="PF00627">
    <property type="entry name" value="UBA"/>
    <property type="match status" value="1"/>
</dbReference>
<dbReference type="SMART" id="SM00220">
    <property type="entry name" value="S_TKc"/>
    <property type="match status" value="1"/>
</dbReference>
<dbReference type="SUPFAM" id="SSF56112">
    <property type="entry name" value="Protein kinase-like (PK-like)"/>
    <property type="match status" value="1"/>
</dbReference>
<dbReference type="SUPFAM" id="SSF46934">
    <property type="entry name" value="UBA-like"/>
    <property type="match status" value="1"/>
</dbReference>
<dbReference type="PROSITE" id="PS51285">
    <property type="entry name" value="AGC_KINASE_CTER"/>
    <property type="match status" value="1"/>
</dbReference>
<dbReference type="PROSITE" id="PS50011">
    <property type="entry name" value="PROTEIN_KINASE_DOM"/>
    <property type="match status" value="1"/>
</dbReference>
<dbReference type="PROSITE" id="PS00108">
    <property type="entry name" value="PROTEIN_KINASE_ST"/>
    <property type="match status" value="1"/>
</dbReference>
<dbReference type="PROSITE" id="PS50030">
    <property type="entry name" value="UBA"/>
    <property type="match status" value="1"/>
</dbReference>
<name>LATS1_MOUSE</name>
<gene>
    <name evidence="13" type="primary">Lats1</name>
    <name evidence="2" type="synonym">Warts</name>
</gene>
<keyword id="KW-0002">3D-structure</keyword>
<keyword id="KW-0067">ATP-binding</keyword>
<keyword id="KW-0131">Cell cycle</keyword>
<keyword id="KW-0132">Cell division</keyword>
<keyword id="KW-0963">Cytoplasm</keyword>
<keyword id="KW-0206">Cytoskeleton</keyword>
<keyword id="KW-0418">Kinase</keyword>
<keyword id="KW-0460">Magnesium</keyword>
<keyword id="KW-0479">Metal-binding</keyword>
<keyword id="KW-0498">Mitosis</keyword>
<keyword id="KW-0547">Nucleotide-binding</keyword>
<keyword id="KW-0597">Phosphoprotein</keyword>
<keyword id="KW-1185">Reference proteome</keyword>
<keyword id="KW-0723">Serine/threonine-protein kinase</keyword>
<keyword id="KW-0808">Transferase</keyword>
<keyword id="KW-0043">Tumor suppressor</keyword>
<organism>
    <name type="scientific">Mus musculus</name>
    <name type="common">Mouse</name>
    <dbReference type="NCBI Taxonomy" id="10090"/>
    <lineage>
        <taxon>Eukaryota</taxon>
        <taxon>Metazoa</taxon>
        <taxon>Chordata</taxon>
        <taxon>Craniata</taxon>
        <taxon>Vertebrata</taxon>
        <taxon>Euteleostomi</taxon>
        <taxon>Mammalia</taxon>
        <taxon>Eutheria</taxon>
        <taxon>Euarchontoglires</taxon>
        <taxon>Glires</taxon>
        <taxon>Rodentia</taxon>
        <taxon>Myomorpha</taxon>
        <taxon>Muroidea</taxon>
        <taxon>Muridae</taxon>
        <taxon>Murinae</taxon>
        <taxon>Mus</taxon>
        <taxon>Mus</taxon>
    </lineage>
</organism>
<comment type="function">
    <text evidence="2 9 10 11">Negative regulator of YAP1 in the Hippo signaling pathway that plays a pivotal role in organ size control and tumor suppression by restricting proliferation and promoting apoptosis (PubMed:21145499). The core of this pathway is composed of a kinase cascade wherein STK3/MST2 and STK4/MST1, in complex with its regulatory protein SAV1, phosphorylates and activates LATS1/2 in complex with its regulatory protein MOB1, which in turn phosphorylates and inactivates YAP1 oncoprotein and WWTR1/TAZ (PubMed:21145499). Phosphorylation of YAP1 by LATS1 inhibits its translocation into the nucleus to regulate cellular genes important for cell proliferation, cell death, and cell migration (PubMed:21145499). Acts as a tumor suppressor which plays a critical role in maintenance of ploidy through its actions in both mitotic progression and the G1 tetraploidy checkpoint (PubMed:9988269). Negatively regulates G2/M transition by down-regulating CDK1 kinase activity (By similarity). Involved in the control of p53 expression (By similarity). Affects cytokinesis by regulating actin polymerization through negative modulation of LIMK1 (By similarity). May also play a role in endocrine function (By similarity). Plays a role in mammary gland epithelial cell differentiation, both through the Hippo signaling pathway and the intracellular estrogen receptor signaling pathway by promoting the degradation of ESR1 (By similarity). Acts as an activator of the NLRP3 inflammasome by mediating phosphorylation of 'Ser-265' of NLRP3 following NLRP3 palmitoylation, promoting NLRP3 activation by NEK7 (PubMed:39173637).</text>
</comment>
<comment type="catalytic activity">
    <reaction evidence="2">
        <text>L-seryl-[protein] + ATP = O-phospho-L-seryl-[protein] + ADP + H(+)</text>
        <dbReference type="Rhea" id="RHEA:17989"/>
        <dbReference type="Rhea" id="RHEA-COMP:9863"/>
        <dbReference type="Rhea" id="RHEA-COMP:11604"/>
        <dbReference type="ChEBI" id="CHEBI:15378"/>
        <dbReference type="ChEBI" id="CHEBI:29999"/>
        <dbReference type="ChEBI" id="CHEBI:30616"/>
        <dbReference type="ChEBI" id="CHEBI:83421"/>
        <dbReference type="ChEBI" id="CHEBI:456216"/>
        <dbReference type="EC" id="2.7.11.1"/>
    </reaction>
</comment>
<comment type="catalytic activity">
    <reaction evidence="2">
        <text>L-threonyl-[protein] + ATP = O-phospho-L-threonyl-[protein] + ADP + H(+)</text>
        <dbReference type="Rhea" id="RHEA:46608"/>
        <dbReference type="Rhea" id="RHEA-COMP:11060"/>
        <dbReference type="Rhea" id="RHEA-COMP:11605"/>
        <dbReference type="ChEBI" id="CHEBI:15378"/>
        <dbReference type="ChEBI" id="CHEBI:30013"/>
        <dbReference type="ChEBI" id="CHEBI:30616"/>
        <dbReference type="ChEBI" id="CHEBI:61977"/>
        <dbReference type="ChEBI" id="CHEBI:456216"/>
        <dbReference type="EC" id="2.7.11.1"/>
    </reaction>
</comment>
<comment type="cofactor">
    <cofactor evidence="1">
        <name>Mg(2+)</name>
        <dbReference type="ChEBI" id="CHEBI:18420"/>
    </cofactor>
</comment>
<comment type="subunit">
    <text evidence="2 9">Complexes with CDK1 in early mitosis (By similarity). LATS1-associated CDK1 has no mitotic cyclin partner and no apparent kinase activity (By similarity). Binds phosphorylated ZYX, locating this protein to the mitotic spindle and suggesting a role for actin regulatory proteins during mitosis (By similarity). Binds to and colocalizes with LIMK1 at the actomyosin contractile ring during cytokinesis (By similarity). Interacts (via PPxY motif 2) with YAP1 (via WW domains) (By similarity). Interacts with MOB1A and MOB1B. Interacts with LIMD1, WTIP and AJUBA (By similarity). Interacts with ESR1, DCAF1 and DCAF13; probably recruits DCAF1 and DCAF13 to ESR1 to promote ESR1 ubiquitination and ubiquitin-mediated proteasomal degradation (By similarity). Interacts with STK3/MST2; this interaction is inhibited in the presence of DLG5 (By similarity). Interacts with SCRIB in the presence of DLG5 (By similarity). Interacts with WWTR1/TAZ (PubMed:21145499). Interacts with WWC1, WWC2 and WWC3 (via their WW domains) (By similarity).</text>
</comment>
<comment type="subcellular location">
    <subcellularLocation>
        <location evidence="2">Cytoplasm</location>
        <location evidence="2">Cytoskeleton</location>
        <location evidence="2">Microtubule organizing center</location>
        <location evidence="2">Centrosome</location>
    </subcellularLocation>
    <subcellularLocation>
        <location evidence="2">Cytoplasm</location>
        <location evidence="2">Cytoskeleton</location>
        <location evidence="2">Spindle</location>
    </subcellularLocation>
    <subcellularLocation>
        <location evidence="2">Midbody</location>
    </subcellularLocation>
    <subcellularLocation>
        <location evidence="2">Cytoplasm</location>
        <location evidence="2">Cytoskeleton</location>
        <location evidence="2">Microtubule organizing center</location>
        <location evidence="2">Spindle pole body</location>
    </subcellularLocation>
    <text evidence="2">Localizes to the centrosomes throughout interphase but migrates to the mitotic apparatus, including spindle pole bodies, mitotic spindle, and midbody, during mitosis.</text>
</comment>
<comment type="PTM">
    <text evidence="2">Autophosphorylated and phosphorylated during M-phase of the cell cycle. Phosphorylated by STK3/MST2 at Ser-908 and Thr-1078, which results in its activation. Phosphorylated by MAP4Ks; in parallel to STK3/MST2 and resulting to its activation. Phosphorylation at Ser-463 by NUAK1 and NUAK2 leads to decreased protein level and is required to regulate cellular senescence and cellular ploidy.</text>
</comment>
<comment type="similarity">
    <text evidence="12">Belongs to the protein kinase superfamily. AGC Ser/Thr protein kinase family.</text>
</comment>
<accession>Q8BYR2</accession>
<accession>B2RY46</accession>
<accession>Q9Z0W4</accession>
<reference key="1">
    <citation type="journal article" date="2004" name="Genome Res.">
        <title>The status, quality, and expansion of the NIH full-length cDNA project: the Mammalian Gene Collection (MGC).</title>
        <authorList>
            <consortium name="The MGC Project Team"/>
        </authorList>
    </citation>
    <scope>NUCLEOTIDE SEQUENCE [LARGE SCALE MRNA]</scope>
    <source>
        <tissue>Brain</tissue>
    </source>
</reference>
<reference key="2">
    <citation type="journal article" date="2005" name="Science">
        <title>The transcriptional landscape of the mammalian genome.</title>
        <authorList>
            <person name="Carninci P."/>
            <person name="Kasukawa T."/>
            <person name="Katayama S."/>
            <person name="Gough J."/>
            <person name="Frith M.C."/>
            <person name="Maeda N."/>
            <person name="Oyama R."/>
            <person name="Ravasi T."/>
            <person name="Lenhard B."/>
            <person name="Wells C."/>
            <person name="Kodzius R."/>
            <person name="Shimokawa K."/>
            <person name="Bajic V.B."/>
            <person name="Brenner S.E."/>
            <person name="Batalov S."/>
            <person name="Forrest A.R."/>
            <person name="Zavolan M."/>
            <person name="Davis M.J."/>
            <person name="Wilming L.G."/>
            <person name="Aidinis V."/>
            <person name="Allen J.E."/>
            <person name="Ambesi-Impiombato A."/>
            <person name="Apweiler R."/>
            <person name="Aturaliya R.N."/>
            <person name="Bailey T.L."/>
            <person name="Bansal M."/>
            <person name="Baxter L."/>
            <person name="Beisel K.W."/>
            <person name="Bersano T."/>
            <person name="Bono H."/>
            <person name="Chalk A.M."/>
            <person name="Chiu K.P."/>
            <person name="Choudhary V."/>
            <person name="Christoffels A."/>
            <person name="Clutterbuck D.R."/>
            <person name="Crowe M.L."/>
            <person name="Dalla E."/>
            <person name="Dalrymple B.P."/>
            <person name="de Bono B."/>
            <person name="Della Gatta G."/>
            <person name="di Bernardo D."/>
            <person name="Down T."/>
            <person name="Engstrom P."/>
            <person name="Fagiolini M."/>
            <person name="Faulkner G."/>
            <person name="Fletcher C.F."/>
            <person name="Fukushima T."/>
            <person name="Furuno M."/>
            <person name="Futaki S."/>
            <person name="Gariboldi M."/>
            <person name="Georgii-Hemming P."/>
            <person name="Gingeras T.R."/>
            <person name="Gojobori T."/>
            <person name="Green R.E."/>
            <person name="Gustincich S."/>
            <person name="Harbers M."/>
            <person name="Hayashi Y."/>
            <person name="Hensch T.K."/>
            <person name="Hirokawa N."/>
            <person name="Hill D."/>
            <person name="Huminiecki L."/>
            <person name="Iacono M."/>
            <person name="Ikeo K."/>
            <person name="Iwama A."/>
            <person name="Ishikawa T."/>
            <person name="Jakt M."/>
            <person name="Kanapin A."/>
            <person name="Katoh M."/>
            <person name="Kawasawa Y."/>
            <person name="Kelso J."/>
            <person name="Kitamura H."/>
            <person name="Kitano H."/>
            <person name="Kollias G."/>
            <person name="Krishnan S.P."/>
            <person name="Kruger A."/>
            <person name="Kummerfeld S.K."/>
            <person name="Kurochkin I.V."/>
            <person name="Lareau L.F."/>
            <person name="Lazarevic D."/>
            <person name="Lipovich L."/>
            <person name="Liu J."/>
            <person name="Liuni S."/>
            <person name="McWilliam S."/>
            <person name="Madan Babu M."/>
            <person name="Madera M."/>
            <person name="Marchionni L."/>
            <person name="Matsuda H."/>
            <person name="Matsuzawa S."/>
            <person name="Miki H."/>
            <person name="Mignone F."/>
            <person name="Miyake S."/>
            <person name="Morris K."/>
            <person name="Mottagui-Tabar S."/>
            <person name="Mulder N."/>
            <person name="Nakano N."/>
            <person name="Nakauchi H."/>
            <person name="Ng P."/>
            <person name="Nilsson R."/>
            <person name="Nishiguchi S."/>
            <person name="Nishikawa S."/>
            <person name="Nori F."/>
            <person name="Ohara O."/>
            <person name="Okazaki Y."/>
            <person name="Orlando V."/>
            <person name="Pang K.C."/>
            <person name="Pavan W.J."/>
            <person name="Pavesi G."/>
            <person name="Pesole G."/>
            <person name="Petrovsky N."/>
            <person name="Piazza S."/>
            <person name="Reed J."/>
            <person name="Reid J.F."/>
            <person name="Ring B.Z."/>
            <person name="Ringwald M."/>
            <person name="Rost B."/>
            <person name="Ruan Y."/>
            <person name="Salzberg S.L."/>
            <person name="Sandelin A."/>
            <person name="Schneider C."/>
            <person name="Schoenbach C."/>
            <person name="Sekiguchi K."/>
            <person name="Semple C.A."/>
            <person name="Seno S."/>
            <person name="Sessa L."/>
            <person name="Sheng Y."/>
            <person name="Shibata Y."/>
            <person name="Shimada H."/>
            <person name="Shimada K."/>
            <person name="Silva D."/>
            <person name="Sinclair B."/>
            <person name="Sperling S."/>
            <person name="Stupka E."/>
            <person name="Sugiura K."/>
            <person name="Sultana R."/>
            <person name="Takenaka Y."/>
            <person name="Taki K."/>
            <person name="Tammoja K."/>
            <person name="Tan S.L."/>
            <person name="Tang S."/>
            <person name="Taylor M.S."/>
            <person name="Tegner J."/>
            <person name="Teichmann S.A."/>
            <person name="Ueda H.R."/>
            <person name="van Nimwegen E."/>
            <person name="Verardo R."/>
            <person name="Wei C.L."/>
            <person name="Yagi K."/>
            <person name="Yamanishi H."/>
            <person name="Zabarovsky E."/>
            <person name="Zhu S."/>
            <person name="Zimmer A."/>
            <person name="Hide W."/>
            <person name="Bult C."/>
            <person name="Grimmond S.M."/>
            <person name="Teasdale R.D."/>
            <person name="Liu E.T."/>
            <person name="Brusic V."/>
            <person name="Quackenbush J."/>
            <person name="Wahlestedt C."/>
            <person name="Mattick J.S."/>
            <person name="Hume D.A."/>
            <person name="Kai C."/>
            <person name="Sasaki D."/>
            <person name="Tomaru Y."/>
            <person name="Fukuda S."/>
            <person name="Kanamori-Katayama M."/>
            <person name="Suzuki M."/>
            <person name="Aoki J."/>
            <person name="Arakawa T."/>
            <person name="Iida J."/>
            <person name="Imamura K."/>
            <person name="Itoh M."/>
            <person name="Kato T."/>
            <person name="Kawaji H."/>
            <person name="Kawagashira N."/>
            <person name="Kawashima T."/>
            <person name="Kojima M."/>
            <person name="Kondo S."/>
            <person name="Konno H."/>
            <person name="Nakano K."/>
            <person name="Ninomiya N."/>
            <person name="Nishio T."/>
            <person name="Okada M."/>
            <person name="Plessy C."/>
            <person name="Shibata K."/>
            <person name="Shiraki T."/>
            <person name="Suzuki S."/>
            <person name="Tagami M."/>
            <person name="Waki K."/>
            <person name="Watahiki A."/>
            <person name="Okamura-Oho Y."/>
            <person name="Suzuki H."/>
            <person name="Kawai J."/>
            <person name="Hayashizaki Y."/>
        </authorList>
    </citation>
    <scope>NUCLEOTIDE SEQUENCE [LARGE SCALE MRNA] OF 1-602</scope>
    <source>
        <strain>C57BL/6J</strain>
        <tissue>Hypothalamus</tissue>
    </source>
</reference>
<reference evidence="12 13" key="3">
    <citation type="journal article" date="1999" name="Nat. Genet.">
        <title>Human homologue of the Drosophila melanogaster lats tumour suppressor modulates CDC2 activity.</title>
        <authorList>
            <person name="Tao W."/>
            <person name="Zhang S."/>
            <person name="Turenchalk G.S."/>
            <person name="Stewart R.A."/>
            <person name="St John M.A."/>
            <person name="Chen W."/>
            <person name="Xu T."/>
        </authorList>
    </citation>
    <scope>NUCLEOTIDE SEQUENCE [MRNA] OF 168-1129</scope>
    <source>
        <tissue evidence="13">Brain</tissue>
    </source>
</reference>
<reference evidence="12" key="4">
    <citation type="journal article" date="1999" name="Nat. Genet.">
        <title>Mice deficient of Lats1 develop soft-tissue sarcomas, ovarian tumours and pituitary dysfunction.</title>
        <authorList>
            <person name="St John M.A."/>
            <person name="Tao W."/>
            <person name="Fei X."/>
            <person name="Fukumoto R."/>
            <person name="Carcangiu M.L."/>
            <person name="Brownstein D.G."/>
            <person name="Parlow A.F."/>
            <person name="McGrath J."/>
            <person name="Xu T."/>
        </authorList>
    </citation>
    <scope>FUNCTION</scope>
</reference>
<reference key="5">
    <citation type="journal article" date="2007" name="Proc. Natl. Acad. Sci. U.S.A.">
        <title>Large-scale phosphorylation analysis of mouse liver.</title>
        <authorList>
            <person name="Villen J."/>
            <person name="Beausoleil S.A."/>
            <person name="Gerber S.A."/>
            <person name="Gygi S.P."/>
        </authorList>
    </citation>
    <scope>PHOSPHORYLATION [LARGE SCALE ANALYSIS] AT SER-463</scope>
    <scope>IDENTIFICATION BY MASS SPECTROMETRY [LARGE SCALE ANALYSIS]</scope>
    <source>
        <tissue>Liver</tissue>
    </source>
</reference>
<reference key="6">
    <citation type="journal article" date="2009" name="Immunity">
        <title>The phagosomal proteome in interferon-gamma-activated macrophages.</title>
        <authorList>
            <person name="Trost M."/>
            <person name="English L."/>
            <person name="Lemieux S."/>
            <person name="Courcelles M."/>
            <person name="Desjardins M."/>
            <person name="Thibault P."/>
        </authorList>
    </citation>
    <scope>PHOSPHORYLATION [LARGE SCALE ANALYSIS] AT THR-246; SER-463 AND SER-612</scope>
    <scope>IDENTIFICATION BY MASS SPECTROMETRY [LARGE SCALE ANALYSIS]</scope>
</reference>
<reference key="7">
    <citation type="journal article" date="2010" name="Cell">
        <title>A tissue-specific atlas of mouse protein phosphorylation and expression.</title>
        <authorList>
            <person name="Huttlin E.L."/>
            <person name="Jedrychowski M.P."/>
            <person name="Elias J.E."/>
            <person name="Goswami T."/>
            <person name="Rad R."/>
            <person name="Beausoleil S.A."/>
            <person name="Villen J."/>
            <person name="Haas W."/>
            <person name="Sowa M.E."/>
            <person name="Gygi S.P."/>
        </authorList>
    </citation>
    <scope>PHOSPHORYLATION [LARGE SCALE ANALYSIS] AT SER-278 AND SER-463</scope>
    <scope>IDENTIFICATION BY MASS SPECTROMETRY [LARGE SCALE ANALYSIS]</scope>
    <source>
        <tissue>Brain</tissue>
        <tissue>Brown adipose tissue</tissue>
        <tissue>Kidney</tissue>
        <tissue>Liver</tissue>
        <tissue>Lung</tissue>
        <tissue>Pancreas</tissue>
        <tissue>Spleen</tissue>
        <tissue>Testis</tissue>
    </source>
</reference>
<reference key="8">
    <citation type="journal article" date="2010" name="Dev. Cell">
        <title>The Crumbs complex couples cell density sensing to Hippo-dependent control of the TGF-beta-SMAD pathway.</title>
        <authorList>
            <person name="Varelas X."/>
            <person name="Samavarchi-Tehrani P."/>
            <person name="Narimatsu M."/>
            <person name="Weiss A."/>
            <person name="Cockburn K."/>
            <person name="Larsen B.G."/>
            <person name="Rossant J."/>
            <person name="Wrana J.L."/>
        </authorList>
    </citation>
    <scope>FUNCTION</scope>
    <scope>INTERACTION WITH WWTR1</scope>
</reference>
<reference key="9">
    <citation type="journal article" date="2024" name="Mol. Cell">
        <title>Consecutive palmitoylation and phosphorylation orchestrates NLRP3 membrane trafficking and inflammasome activation.</title>
        <authorList>
            <person name="Nie L."/>
            <person name="Fei C."/>
            <person name="Fan Y."/>
            <person name="Dang F."/>
            <person name="Zhao Z."/>
            <person name="Zhu T."/>
            <person name="Wu X."/>
            <person name="Dai T."/>
            <person name="Balasubramanian A."/>
            <person name="Pan J."/>
            <person name="Hu Y."/>
            <person name="Luo H.R."/>
            <person name="Wei W."/>
            <person name="Chen J."/>
        </authorList>
    </citation>
    <scope>FUNCTION</scope>
</reference>